<feature type="chain" id="PRO_0000409743" description="Suppressor of hydroxyurea sensitivity protein 2">
    <location>
        <begin position="1"/>
        <end position="223"/>
    </location>
</feature>
<name>SHU2_YEASL</name>
<keyword id="KW-0227">DNA damage</keyword>
<keyword id="KW-0233">DNA recombination</keyword>
<keyword id="KW-0234">DNA repair</keyword>
<keyword id="KW-0539">Nucleus</keyword>
<gene>
    <name type="primary">SHU2</name>
    <name type="ORF">QA23_0811</name>
</gene>
<proteinExistence type="inferred from homology"/>
<dbReference type="EMBL" id="ADVV01000017">
    <property type="protein sequence ID" value="EGA83579.1"/>
    <property type="molecule type" value="Genomic_DNA"/>
</dbReference>
<dbReference type="HOGENOM" id="CLU_1115918_0_0_1"/>
<dbReference type="OrthoDB" id="38539at4893"/>
<dbReference type="GO" id="GO:0005634">
    <property type="term" value="C:nucleus"/>
    <property type="evidence" value="ECO:0007669"/>
    <property type="project" value="UniProtKB-SubCell"/>
</dbReference>
<dbReference type="GO" id="GO:0006310">
    <property type="term" value="P:DNA recombination"/>
    <property type="evidence" value="ECO:0007669"/>
    <property type="project" value="UniProtKB-KW"/>
</dbReference>
<dbReference type="GO" id="GO:0006281">
    <property type="term" value="P:DNA repair"/>
    <property type="evidence" value="ECO:0007669"/>
    <property type="project" value="UniProtKB-KW"/>
</dbReference>
<protein>
    <recommendedName>
        <fullName>Suppressor of hydroxyurea sensitivity protein 2</fullName>
    </recommendedName>
</protein>
<reference key="1">
    <citation type="journal article" date="2011" name="PLoS Genet.">
        <title>Whole-genome comparison reveals novel genetic elements that characterize the genome of industrial strains of Saccharomyces cerevisiae.</title>
        <authorList>
            <person name="Borneman A.R."/>
            <person name="Desany B.A."/>
            <person name="Riches D."/>
            <person name="Affourtit J.P."/>
            <person name="Forgan A.H."/>
            <person name="Pretorius I.S."/>
            <person name="Egholm M."/>
            <person name="Chambers P.J."/>
        </authorList>
    </citation>
    <scope>NUCLEOTIDE SEQUENCE [LARGE SCALE GENOMIC DNA]</scope>
    <source>
        <strain>Lalvin QA23</strain>
    </source>
</reference>
<organism>
    <name type="scientific">Saccharomyces cerevisiae (strain Lalvin QA23)</name>
    <name type="common">Baker's yeast</name>
    <dbReference type="NCBI Taxonomy" id="764098"/>
    <lineage>
        <taxon>Eukaryota</taxon>
        <taxon>Fungi</taxon>
        <taxon>Dikarya</taxon>
        <taxon>Ascomycota</taxon>
        <taxon>Saccharomycotina</taxon>
        <taxon>Saccharomycetes</taxon>
        <taxon>Saccharomycetales</taxon>
        <taxon>Saccharomycetaceae</taxon>
        <taxon>Saccharomyces</taxon>
    </lineage>
</organism>
<accession>E7KLI6</accession>
<evidence type="ECO:0000250" key="1"/>
<evidence type="ECO:0000305" key="2"/>
<comment type="function">
    <text evidence="1">Plays a role in a RAD51/RAD54-dependent homologous recombination repair (HRR) pathway to repair MMS-induced lesions during S-phase. Required for error-free repair of spontaneous and induced DNA lesions to protect the genome from mutation (By similarity).</text>
</comment>
<comment type="subunit">
    <text evidence="1">Component of the SHU complex composed of at least CSM2, PSY3, SHU1 and SHU2.</text>
</comment>
<comment type="subcellular location">
    <subcellularLocation>
        <location evidence="1">Nucleus</location>
    </subcellularLocation>
</comment>
<comment type="similarity">
    <text evidence="2">Belongs to the SHU2 family.</text>
</comment>
<sequence>MSKDVIEYSKLFAKLXNTNDDTKLDDTIASFLYYMFPRELFIRAISLLESSDMFIYILDRVHNKEGNEHTSLIDVLVDEFYKGSSNSLLEYRLIVKDTNDGAPPILVDIAHWFCSCEEFCKYFHEALEKTDEKEELHDVLINEVDDHLQFSDDRFAQLDPHSLSKQWYFKFDKXCCSHLLAFSILLRSSINVLKFFTVNSNKVFVIAIDNIDEWLNLHINIVE</sequence>